<sequence>MYASNKTYPSSRALPCLVEKVEAQHVDGAIRVRITTLEQKDWRQAKAAAVEAKYEAEREIQLRAHGNVKDIEITRESAFEHFATDPWAQHVGVDIEAQRERLLAEPGSRKILIIGAGFGGLLFAVRLIQTGRFTAEDITMIDSAAGFGGTWYWNRYPGLMCDTESYIYMPLLEETGYMPRNKYASGNEIREHAERIAQTYGLATRAMFRTVVEKLDWNEAEKVWTVAGSMLGIANNGQRDNMMSFQMVSQFTIMASGSFASPRVPDYPNIFDYKGKLFHTARWDYNYTGGSVENPKMLGLADKTVAIIGTGASAVQIVPQLAKYSNKLIVFQRTPAAVDARNNCPTDPVWWETETQAEGTGWQKRRQENFNAFTCNEKPLPSVNKVDDGWTRMPSFSILIGGPQGLDPDYVDRMRAVDMNRQEKIRARAHNIVQSEGSADLLTPWYPGWCKRPCFHDDYLSAFNLPNVELVDIRHNGISHFTANGLVANDIEYELDVIILSTGYTVPVTRASPSSRANIAVSGRNGTTMEAKWANGLATLHGVMTRDLPNLFFAGTSQAGACVNLVYALDQNATHVAYILANAFDRRPSDSARVIIEPTPGSEEAWAMQVLQRAAGFRGIAGCTPGYLNGYGMDASSLSPEQQINAARLAAWGEGIASYVRYLEAWRAKGDLNGIELTFFAKF</sequence>
<keyword id="KW-0274">FAD</keyword>
<keyword id="KW-0285">Flavoprotein</keyword>
<keyword id="KW-0325">Glycoprotein</keyword>
<keyword id="KW-0472">Membrane</keyword>
<keyword id="KW-0503">Monooxygenase</keyword>
<keyword id="KW-0521">NADP</keyword>
<keyword id="KW-0560">Oxidoreductase</keyword>
<keyword id="KW-1185">Reference proteome</keyword>
<keyword id="KW-0812">Transmembrane</keyword>
<keyword id="KW-1133">Transmembrane helix</keyword>
<comment type="function">
    <text evidence="4 5 6 7">FAD-binding monooxygenase; part of the gene cluster A that mediates the biosynthesis of austinol and dehydroaustinol, two fungal meroterpenoids (PubMed:22329759). The first step of the pathway is the synthesis of 3,5-dimethylorsellinic acid by the polyketide synthase ausA (PubMed:22329759). 3,5-dimethylorsellinic acid is then prenylated by the polyprenyl transferase ausN (PubMed:22329759). Further epoxidation by the FAD-dependent monooxygenase ausM and cyclization by the probable terpene cyclase ausL lead to the formation of protoaustinoid A (PubMed:22329759). Protoaustinoid A is then oxidized to spiro-lactone preaustinoid A3 by the combined action of the FAD-binding monooxygenases ausB and ausC, and the dioxygenase ausE (PubMed:22329759, PubMed:23865690). Acid-catalyzed keto-rearrangement and ring contraction of the tetraketide portion of preaustinoid A3 by ausJ lead to the formation of preaustinoid A4 (PubMed:22329759). The aldo-keto reductase ausK, with the help of ausH, is involved in the next step by transforming preaustinoid A4 into isoaustinone which is in turn hydroxylated by the P450 monooxygenase ausI to form austinolide (PubMed:22329759). Finally, the cytochrome P450 monooxygenase ausG modifies austinolide to austinol (PubMed:22329759). Austinol can be further modified to dehydroaustinol which forms a diffusible complex with diorcinol that initiates conidiation (PubMed:22234162, PubMed:22329759). Due to genetic rearrangements of the clusters and the subsequent loss of some enzymes, the end products of the Emericella nidulans austinoid biosynthesis clusters are austinol and dehydroaustinol, even if additional enzymes, such as the O-acetyltransferase ausQ and the cytochrome P450 monooxygenase ausR are still functional (PubMed:29076725).</text>
</comment>
<comment type="catalytic activity">
    <reaction evidence="6">
        <text>preaustinoid A + AH2 + O2 = preaustinoid A1 + A + H2O</text>
        <dbReference type="Rhea" id="RHEA:65168"/>
        <dbReference type="ChEBI" id="CHEBI:13193"/>
        <dbReference type="ChEBI" id="CHEBI:15377"/>
        <dbReference type="ChEBI" id="CHEBI:15379"/>
        <dbReference type="ChEBI" id="CHEBI:17499"/>
        <dbReference type="ChEBI" id="CHEBI:69023"/>
        <dbReference type="ChEBI" id="CHEBI:69026"/>
    </reaction>
    <physiologicalReaction direction="left-to-right" evidence="6">
        <dbReference type="Rhea" id="RHEA:65169"/>
    </physiologicalReaction>
</comment>
<comment type="cofactor">
    <cofactor evidence="1">
        <name>FAD</name>
        <dbReference type="ChEBI" id="CHEBI:57692"/>
    </cofactor>
    <text evidence="1">Binds 1 FAD per subunit.</text>
</comment>
<comment type="pathway">
    <text evidence="5">Secondary metabolite biosynthesis; terpenoid biosynthesis.</text>
</comment>
<comment type="subcellular location">
    <subcellularLocation>
        <location evidence="2">Membrane</location>
        <topology evidence="2">Single-pass membrane protein</topology>
    </subcellularLocation>
</comment>
<comment type="disruption phenotype">
    <text evidence="5">Impairs the synthesis of austinol and dehydroaustinol (PubMed:22329759).</text>
</comment>
<comment type="miscellaneous">
    <text evidence="10">In A.calidoustus, the austinoid gene cluster lies on a contiguous DNA region, while clusters from E.nidulans and P.brasilianum are split in their respective genomes. Genetic rearrangements provoked variability among the clusters and E.nidulans produces the least number of austionoid derivatives with the end products austinol and dehydroaustinol, while P.brasilianum can produce until acetoxydehydroaustin, and A.calidoustus produces the highest number of identified derivatives.</text>
</comment>
<comment type="similarity">
    <text evidence="9">Belongs to the FAD-binding monooxygenase family.</text>
</comment>
<comment type="sequence caution" evidence="9">
    <conflict type="erroneous gene model prediction">
        <sequence resource="EMBL-CDS" id="CBF80424"/>
    </conflict>
</comment>
<dbReference type="EC" id="1.14.13.-" evidence="6"/>
<dbReference type="EMBL" id="BN001305">
    <property type="protein sequence ID" value="CBF80424.1"/>
    <property type="status" value="ALT_SEQ"/>
    <property type="molecule type" value="Genomic_DNA"/>
</dbReference>
<dbReference type="EMBL" id="AACD01000152">
    <property type="protein sequence ID" value="EAA66901.1"/>
    <property type="molecule type" value="Genomic_DNA"/>
</dbReference>
<dbReference type="RefSeq" id="XP_681650.1">
    <property type="nucleotide sequence ID" value="XM_676558.1"/>
</dbReference>
<dbReference type="SMR" id="C8VE79"/>
<dbReference type="STRING" id="227321.C8VE79"/>
<dbReference type="GlyCosmos" id="C8VE79">
    <property type="glycosylation" value="4 sites, No reported glycans"/>
</dbReference>
<dbReference type="EnsemblFungi" id="CBF80424">
    <property type="protein sequence ID" value="CBF80424"/>
    <property type="gene ID" value="ANIA_08381"/>
</dbReference>
<dbReference type="KEGG" id="ani:ANIA_08381"/>
<dbReference type="VEuPathDB" id="FungiDB:AN8381"/>
<dbReference type="eggNOG" id="ENOG502SHCE">
    <property type="taxonomic scope" value="Eukaryota"/>
</dbReference>
<dbReference type="HOGENOM" id="CLU_006937_8_2_1"/>
<dbReference type="InParanoid" id="C8VE79"/>
<dbReference type="OMA" id="HIAYIIA"/>
<dbReference type="OrthoDB" id="66881at2759"/>
<dbReference type="UniPathway" id="UPA00213"/>
<dbReference type="Proteomes" id="UP000000560">
    <property type="component" value="Chromosome V"/>
</dbReference>
<dbReference type="GO" id="GO:0016020">
    <property type="term" value="C:membrane"/>
    <property type="evidence" value="ECO:0007669"/>
    <property type="project" value="UniProtKB-SubCell"/>
</dbReference>
<dbReference type="GO" id="GO:0004497">
    <property type="term" value="F:monooxygenase activity"/>
    <property type="evidence" value="ECO:0007669"/>
    <property type="project" value="UniProtKB-KW"/>
</dbReference>
<dbReference type="GO" id="GO:1900560">
    <property type="term" value="P:austinol biosynthetic process"/>
    <property type="evidence" value="ECO:0000315"/>
    <property type="project" value="AspGD"/>
</dbReference>
<dbReference type="GO" id="GO:1900563">
    <property type="term" value="P:dehydroaustinol biosynthetic process"/>
    <property type="evidence" value="ECO:0000314"/>
    <property type="project" value="GO_Central"/>
</dbReference>
<dbReference type="GO" id="GO:0016114">
    <property type="term" value="P:terpenoid biosynthetic process"/>
    <property type="evidence" value="ECO:0007669"/>
    <property type="project" value="UniProtKB-UniPathway"/>
</dbReference>
<dbReference type="FunFam" id="3.50.50.60:FF:000214">
    <property type="entry name" value="PROBABLE MONOOXYGENASE"/>
    <property type="match status" value="1"/>
</dbReference>
<dbReference type="FunFam" id="3.50.50.60:FF:000518">
    <property type="entry name" value="Steroid monooxygenase, putative"/>
    <property type="match status" value="1"/>
</dbReference>
<dbReference type="Gene3D" id="3.50.50.60">
    <property type="entry name" value="FAD/NAD(P)-binding domain"/>
    <property type="match status" value="3"/>
</dbReference>
<dbReference type="InterPro" id="IPR050775">
    <property type="entry name" value="FAD-binding_Monooxygenases"/>
</dbReference>
<dbReference type="InterPro" id="IPR036188">
    <property type="entry name" value="FAD/NAD-bd_sf"/>
</dbReference>
<dbReference type="PANTHER" id="PTHR43098:SF2">
    <property type="entry name" value="FAD-BINDING MONOOXYGENASE AUSB-RELATED"/>
    <property type="match status" value="1"/>
</dbReference>
<dbReference type="PANTHER" id="PTHR43098">
    <property type="entry name" value="L-ORNITHINE N(5)-MONOOXYGENASE-RELATED"/>
    <property type="match status" value="1"/>
</dbReference>
<dbReference type="Pfam" id="PF13450">
    <property type="entry name" value="NAD_binding_8"/>
    <property type="match status" value="1"/>
</dbReference>
<dbReference type="SUPFAM" id="SSF51905">
    <property type="entry name" value="FAD/NAD(P)-binding domain"/>
    <property type="match status" value="1"/>
</dbReference>
<feature type="chain" id="PRO_0000436484" description="FAD-binding monooxygenase ausC">
    <location>
        <begin position="1"/>
        <end position="683"/>
    </location>
</feature>
<feature type="transmembrane region" description="Helical" evidence="2">
    <location>
        <begin position="111"/>
        <end position="131"/>
    </location>
</feature>
<feature type="binding site" evidence="1">
    <location>
        <begin position="150"/>
        <end position="153"/>
    </location>
    <ligand>
        <name>FAD</name>
        <dbReference type="ChEBI" id="CHEBI:57692"/>
    </ligand>
</feature>
<feature type="binding site" evidence="1">
    <location>
        <begin position="160"/>
        <end position="162"/>
    </location>
    <ligand>
        <name>NADP(+)</name>
        <dbReference type="ChEBI" id="CHEBI:58349"/>
    </ligand>
</feature>
<feature type="binding site" evidence="1">
    <location>
        <begin position="162"/>
        <end position="163"/>
    </location>
    <ligand>
        <name>FAD</name>
        <dbReference type="ChEBI" id="CHEBI:57692"/>
    </ligand>
</feature>
<feature type="binding site" evidence="1">
    <location>
        <position position="168"/>
    </location>
    <ligand>
        <name>FAD</name>
        <dbReference type="ChEBI" id="CHEBI:57692"/>
    </ligand>
</feature>
<feature type="binding site" evidence="1">
    <location>
        <begin position="310"/>
        <end position="316"/>
    </location>
    <ligand>
        <name>NADP(+)</name>
        <dbReference type="ChEBI" id="CHEBI:58349"/>
    </ligand>
</feature>
<feature type="binding site" evidence="1">
    <location>
        <begin position="333"/>
        <end position="334"/>
    </location>
    <ligand>
        <name>NADP(+)</name>
        <dbReference type="ChEBI" id="CHEBI:58349"/>
    </ligand>
</feature>
<feature type="site" description="Transition state stabilizer" evidence="1">
    <location>
        <position position="452"/>
    </location>
</feature>
<feature type="glycosylation site" description="N-linked (GlcNAc...) asparagine" evidence="3">
    <location>
        <position position="5"/>
    </location>
</feature>
<feature type="glycosylation site" description="N-linked (GlcNAc...) asparagine" evidence="3">
    <location>
        <position position="286"/>
    </location>
</feature>
<feature type="glycosylation site" description="N-linked (GlcNAc...) asparagine" evidence="3">
    <location>
        <position position="525"/>
    </location>
</feature>
<feature type="glycosylation site" description="N-linked (GlcNAc...) asparagine" evidence="3">
    <location>
        <position position="572"/>
    </location>
</feature>
<proteinExistence type="evidence at protein level"/>
<protein>
    <recommendedName>
        <fullName evidence="9">FAD-binding monooxygenase ausC</fullName>
        <ecNumber evidence="6">1.14.13.-</ecNumber>
    </recommendedName>
    <alternativeName>
        <fullName evidence="8">Austinoid biosynthesis clusters protein C</fullName>
    </alternativeName>
</protein>
<reference key="1">
    <citation type="journal article" date="2005" name="Nature">
        <title>Sequencing of Aspergillus nidulans and comparative analysis with A. fumigatus and A. oryzae.</title>
        <authorList>
            <person name="Galagan J.E."/>
            <person name="Calvo S.E."/>
            <person name="Cuomo C."/>
            <person name="Ma L.-J."/>
            <person name="Wortman J.R."/>
            <person name="Batzoglou S."/>
            <person name="Lee S.-I."/>
            <person name="Bastuerkmen M."/>
            <person name="Spevak C.C."/>
            <person name="Clutterbuck J."/>
            <person name="Kapitonov V."/>
            <person name="Jurka J."/>
            <person name="Scazzocchio C."/>
            <person name="Farman M.L."/>
            <person name="Butler J."/>
            <person name="Purcell S."/>
            <person name="Harris S."/>
            <person name="Braus G.H."/>
            <person name="Draht O."/>
            <person name="Busch S."/>
            <person name="D'Enfert C."/>
            <person name="Bouchier C."/>
            <person name="Goldman G.H."/>
            <person name="Bell-Pedersen D."/>
            <person name="Griffiths-Jones S."/>
            <person name="Doonan J.H."/>
            <person name="Yu J."/>
            <person name="Vienken K."/>
            <person name="Pain A."/>
            <person name="Freitag M."/>
            <person name="Selker E.U."/>
            <person name="Archer D.B."/>
            <person name="Penalva M.A."/>
            <person name="Oakley B.R."/>
            <person name="Momany M."/>
            <person name="Tanaka T."/>
            <person name="Kumagai T."/>
            <person name="Asai K."/>
            <person name="Machida M."/>
            <person name="Nierman W.C."/>
            <person name="Denning D.W."/>
            <person name="Caddick M.X."/>
            <person name="Hynes M."/>
            <person name="Paoletti M."/>
            <person name="Fischer R."/>
            <person name="Miller B.L."/>
            <person name="Dyer P.S."/>
            <person name="Sachs M.S."/>
            <person name="Osmani S.A."/>
            <person name="Birren B.W."/>
        </authorList>
    </citation>
    <scope>NUCLEOTIDE SEQUENCE [LARGE SCALE GENOMIC DNA]</scope>
    <source>
        <strain>FGSC A4 / ATCC 38163 / CBS 112.46 / NRRL 194 / M139</strain>
    </source>
</reference>
<reference key="2">
    <citation type="journal article" date="2009" name="Fungal Genet. Biol.">
        <title>The 2008 update of the Aspergillus nidulans genome annotation: a community effort.</title>
        <authorList>
            <person name="Wortman J.R."/>
            <person name="Gilsenan J.M."/>
            <person name="Joardar V."/>
            <person name="Deegan J."/>
            <person name="Clutterbuck J."/>
            <person name="Andersen M.R."/>
            <person name="Archer D."/>
            <person name="Bencina M."/>
            <person name="Braus G."/>
            <person name="Coutinho P."/>
            <person name="von Dohren H."/>
            <person name="Doonan J."/>
            <person name="Driessen A.J."/>
            <person name="Durek P."/>
            <person name="Espeso E."/>
            <person name="Fekete E."/>
            <person name="Flipphi M."/>
            <person name="Estrada C.G."/>
            <person name="Geysens S."/>
            <person name="Goldman G."/>
            <person name="de Groot P.W."/>
            <person name="Hansen K."/>
            <person name="Harris S.D."/>
            <person name="Heinekamp T."/>
            <person name="Helmstaedt K."/>
            <person name="Henrissat B."/>
            <person name="Hofmann G."/>
            <person name="Homan T."/>
            <person name="Horio T."/>
            <person name="Horiuchi H."/>
            <person name="James S."/>
            <person name="Jones M."/>
            <person name="Karaffa L."/>
            <person name="Karanyi Z."/>
            <person name="Kato M."/>
            <person name="Keller N."/>
            <person name="Kelly D.E."/>
            <person name="Kiel J.A."/>
            <person name="Kim J.M."/>
            <person name="van der Klei I.J."/>
            <person name="Klis F.M."/>
            <person name="Kovalchuk A."/>
            <person name="Krasevec N."/>
            <person name="Kubicek C.P."/>
            <person name="Liu B."/>
            <person name="Maccabe A."/>
            <person name="Meyer V."/>
            <person name="Mirabito P."/>
            <person name="Miskei M."/>
            <person name="Mos M."/>
            <person name="Mullins J."/>
            <person name="Nelson D.R."/>
            <person name="Nielsen J."/>
            <person name="Oakley B.R."/>
            <person name="Osmani S.A."/>
            <person name="Pakula T."/>
            <person name="Paszewski A."/>
            <person name="Paulsen I."/>
            <person name="Pilsyk S."/>
            <person name="Pocsi I."/>
            <person name="Punt P.J."/>
            <person name="Ram A.F."/>
            <person name="Ren Q."/>
            <person name="Robellet X."/>
            <person name="Robson G."/>
            <person name="Seiboth B."/>
            <person name="van Solingen P."/>
            <person name="Specht T."/>
            <person name="Sun J."/>
            <person name="Taheri-Talesh N."/>
            <person name="Takeshita N."/>
            <person name="Ussery D."/>
            <person name="vanKuyk P.A."/>
            <person name="Visser H."/>
            <person name="van de Vondervoort P.J."/>
            <person name="de Vries R.P."/>
            <person name="Walton J."/>
            <person name="Xiang X."/>
            <person name="Xiong Y."/>
            <person name="Zeng A.P."/>
            <person name="Brandt B.W."/>
            <person name="Cornell M.J."/>
            <person name="van den Hondel C.A."/>
            <person name="Visser J."/>
            <person name="Oliver S.G."/>
            <person name="Turner G."/>
        </authorList>
    </citation>
    <scope>GENOME REANNOTATION</scope>
    <source>
        <strain>FGSC A4 / ATCC 38163 / CBS 112.46 / NRRL 194 / M139</strain>
    </source>
</reference>
<reference key="3">
    <citation type="journal article" date="2012" name="ACS Chem. Biol.">
        <title>Signaling the induction of sporulation involves the interaction of two secondary metabolites in Aspergillus nidulans.</title>
        <authorList>
            <person name="Rodriguez-Urra A.B."/>
            <person name="Jimenez C."/>
            <person name="Nieto M.I."/>
            <person name="Rodriguez J."/>
            <person name="Hayashi H."/>
            <person name="Ugalde U."/>
        </authorList>
    </citation>
    <scope>FUNCTION</scope>
</reference>
<reference key="4">
    <citation type="journal article" date="2012" name="J. Am. Chem. Soc.">
        <title>Two separate gene clusters encode the biosynthetic pathway for the meroterpenoids austinol and dehydroaustinol in Aspergillus nidulans.</title>
        <authorList>
            <person name="Lo H.C."/>
            <person name="Entwistle R."/>
            <person name="Guo C.J."/>
            <person name="Ahuja M."/>
            <person name="Szewczyk E."/>
            <person name="Hung J.H."/>
            <person name="Chiang Y.M."/>
            <person name="Oakley B.R."/>
            <person name="Wang C.C."/>
        </authorList>
    </citation>
    <scope>FUNCTION</scope>
    <scope>DISRUPTION PHENOTYPE</scope>
</reference>
<reference key="5">
    <citation type="journal article" date="2013" name="J. Am. Chem. Soc.">
        <title>Spiro-ring formation is catalyzed by a multifunctional dioxygenase in austinol biosynthesis.</title>
        <authorList>
            <person name="Matsuda Y."/>
            <person name="Awakawa T."/>
            <person name="Wakimoto T."/>
            <person name="Abe I."/>
        </authorList>
    </citation>
    <scope>FUNCTION</scope>
    <scope>CATALYTIC ACTIVITY</scope>
</reference>
<reference key="6">
    <citation type="journal article" date="2017" name="ACS Chem. Biol.">
        <title>Rewiring of the austinoid biosynthetic pathway in filamentous fungi.</title>
        <authorList>
            <person name="Mattern D.J."/>
            <person name="Valiante V."/>
            <person name="Horn F."/>
            <person name="Petzke L."/>
            <person name="Brakhage A.A."/>
        </authorList>
    </citation>
    <scope>FUNCTION</scope>
</reference>
<evidence type="ECO:0000250" key="1">
    <source>
        <dbReference type="UniProtKB" id="H3JQW0"/>
    </source>
</evidence>
<evidence type="ECO:0000255" key="2"/>
<evidence type="ECO:0000255" key="3">
    <source>
        <dbReference type="PROSITE-ProRule" id="PRU00498"/>
    </source>
</evidence>
<evidence type="ECO:0000269" key="4">
    <source>
    </source>
</evidence>
<evidence type="ECO:0000269" key="5">
    <source>
    </source>
</evidence>
<evidence type="ECO:0000269" key="6">
    <source>
    </source>
</evidence>
<evidence type="ECO:0000269" key="7">
    <source>
    </source>
</evidence>
<evidence type="ECO:0000303" key="8">
    <source>
    </source>
</evidence>
<evidence type="ECO:0000305" key="9"/>
<evidence type="ECO:0000305" key="10">
    <source>
    </source>
</evidence>
<gene>
    <name evidence="8" type="primary">ausC</name>
    <name type="ORF">AN8381</name>
</gene>
<accession>C8VE79</accession>
<accession>Q5ATJ9</accession>
<organism>
    <name type="scientific">Emericella nidulans (strain FGSC A4 / ATCC 38163 / CBS 112.46 / NRRL 194 / M139)</name>
    <name type="common">Aspergillus nidulans</name>
    <dbReference type="NCBI Taxonomy" id="227321"/>
    <lineage>
        <taxon>Eukaryota</taxon>
        <taxon>Fungi</taxon>
        <taxon>Dikarya</taxon>
        <taxon>Ascomycota</taxon>
        <taxon>Pezizomycotina</taxon>
        <taxon>Eurotiomycetes</taxon>
        <taxon>Eurotiomycetidae</taxon>
        <taxon>Eurotiales</taxon>
        <taxon>Aspergillaceae</taxon>
        <taxon>Aspergillus</taxon>
        <taxon>Aspergillus subgen. Nidulantes</taxon>
    </lineage>
</organism>
<name>AUSC_EMENI</name>